<dbReference type="EMBL" id="CP000728">
    <property type="protein sequence ID" value="ABS41967.1"/>
    <property type="molecule type" value="Genomic_DNA"/>
</dbReference>
<dbReference type="RefSeq" id="WP_003359447.1">
    <property type="nucleotide sequence ID" value="NC_009699.1"/>
</dbReference>
<dbReference type="KEGG" id="cbf:CLI_3891"/>
<dbReference type="HOGENOM" id="CLU_144811_6_0_9"/>
<dbReference type="Proteomes" id="UP000002410">
    <property type="component" value="Chromosome"/>
</dbReference>
<dbReference type="GO" id="GO:0005886">
    <property type="term" value="C:plasma membrane"/>
    <property type="evidence" value="ECO:0007669"/>
    <property type="project" value="UniProtKB-SubCell"/>
</dbReference>
<dbReference type="HAMAP" id="MF_00386">
    <property type="entry name" value="UPF0161_YidD"/>
    <property type="match status" value="1"/>
</dbReference>
<dbReference type="InterPro" id="IPR002696">
    <property type="entry name" value="Membr_insert_effic_factor_YidD"/>
</dbReference>
<dbReference type="NCBIfam" id="TIGR00278">
    <property type="entry name" value="membrane protein insertion efficiency factor YidD"/>
    <property type="match status" value="1"/>
</dbReference>
<dbReference type="PANTHER" id="PTHR33383">
    <property type="entry name" value="MEMBRANE PROTEIN INSERTION EFFICIENCY FACTOR-RELATED"/>
    <property type="match status" value="1"/>
</dbReference>
<dbReference type="PANTHER" id="PTHR33383:SF1">
    <property type="entry name" value="MEMBRANE PROTEIN INSERTION EFFICIENCY FACTOR-RELATED"/>
    <property type="match status" value="1"/>
</dbReference>
<dbReference type="Pfam" id="PF01809">
    <property type="entry name" value="YidD"/>
    <property type="match status" value="1"/>
</dbReference>
<dbReference type="SMART" id="SM01234">
    <property type="entry name" value="Haemolytic"/>
    <property type="match status" value="1"/>
</dbReference>
<name>YIDD_CLOBL</name>
<feature type="chain" id="PRO_1000013083" description="Putative membrane protein insertion efficiency factor">
    <location>
        <begin position="1"/>
        <end position="69"/>
    </location>
</feature>
<comment type="function">
    <text evidence="1">Could be involved in insertion of integral membrane proteins into the membrane.</text>
</comment>
<comment type="subcellular location">
    <subcellularLocation>
        <location evidence="1">Cell membrane</location>
        <topology evidence="1">Peripheral membrane protein</topology>
        <orientation evidence="1">Cytoplasmic side</orientation>
    </subcellularLocation>
</comment>
<comment type="similarity">
    <text evidence="1">Belongs to the UPF0161 family.</text>
</comment>
<keyword id="KW-1003">Cell membrane</keyword>
<keyword id="KW-0472">Membrane</keyword>
<organism>
    <name type="scientific">Clostridium botulinum (strain Langeland / NCTC 10281 / Type F)</name>
    <dbReference type="NCBI Taxonomy" id="441772"/>
    <lineage>
        <taxon>Bacteria</taxon>
        <taxon>Bacillati</taxon>
        <taxon>Bacillota</taxon>
        <taxon>Clostridia</taxon>
        <taxon>Eubacteriales</taxon>
        <taxon>Clostridiaceae</taxon>
        <taxon>Clostridium</taxon>
    </lineage>
</organism>
<protein>
    <recommendedName>
        <fullName evidence="1">Putative membrane protein insertion efficiency factor</fullName>
    </recommendedName>
</protein>
<proteinExistence type="inferred from homology"/>
<sequence length="69" mass="8031">MKNLLICIIKMYRKYISPLKRPSCRFYPTCSQYSLEAIEKYGALKGTLISIKRILKCHPFNEGGYDPVK</sequence>
<evidence type="ECO:0000255" key="1">
    <source>
        <dbReference type="HAMAP-Rule" id="MF_00386"/>
    </source>
</evidence>
<reference key="1">
    <citation type="submission" date="2007-06" db="EMBL/GenBank/DDBJ databases">
        <authorList>
            <person name="Brinkac L.M."/>
            <person name="Daugherty S."/>
            <person name="Dodson R.J."/>
            <person name="Madupu R."/>
            <person name="Brown J.L."/>
            <person name="Bruce D."/>
            <person name="Detter C."/>
            <person name="Munk C."/>
            <person name="Smith L.A."/>
            <person name="Smith T.J."/>
            <person name="White O."/>
            <person name="Brettin T.S."/>
        </authorList>
    </citation>
    <scope>NUCLEOTIDE SEQUENCE [LARGE SCALE GENOMIC DNA]</scope>
    <source>
        <strain>Langeland / NCTC 10281 / Type F</strain>
    </source>
</reference>
<gene>
    <name type="ordered locus">CLI_3891</name>
</gene>
<accession>A7GJP2</accession>